<protein>
    <recommendedName>
        <fullName evidence="1">Ribosomal protein L11 methyltransferase</fullName>
        <shortName evidence="1">L11 Mtase</shortName>
        <ecNumber evidence="1">2.1.1.-</ecNumber>
    </recommendedName>
</protein>
<keyword id="KW-0963">Cytoplasm</keyword>
<keyword id="KW-0489">Methyltransferase</keyword>
<keyword id="KW-0949">S-adenosyl-L-methionine</keyword>
<keyword id="KW-0808">Transferase</keyword>
<proteinExistence type="inferred from homology"/>
<organism>
    <name type="scientific">Salmonella gallinarum (strain 287/91 / NCTC 13346)</name>
    <dbReference type="NCBI Taxonomy" id="550538"/>
    <lineage>
        <taxon>Bacteria</taxon>
        <taxon>Pseudomonadati</taxon>
        <taxon>Pseudomonadota</taxon>
        <taxon>Gammaproteobacteria</taxon>
        <taxon>Enterobacterales</taxon>
        <taxon>Enterobacteriaceae</taxon>
        <taxon>Salmonella</taxon>
    </lineage>
</organism>
<name>PRMA_SALG2</name>
<evidence type="ECO:0000255" key="1">
    <source>
        <dbReference type="HAMAP-Rule" id="MF_00735"/>
    </source>
</evidence>
<feature type="chain" id="PRO_1000132821" description="Ribosomal protein L11 methyltransferase">
    <location>
        <begin position="1"/>
        <end position="293"/>
    </location>
</feature>
<feature type="binding site" evidence="1">
    <location>
        <position position="145"/>
    </location>
    <ligand>
        <name>S-adenosyl-L-methionine</name>
        <dbReference type="ChEBI" id="CHEBI:59789"/>
    </ligand>
</feature>
<feature type="binding site" evidence="1">
    <location>
        <position position="166"/>
    </location>
    <ligand>
        <name>S-adenosyl-L-methionine</name>
        <dbReference type="ChEBI" id="CHEBI:59789"/>
    </ligand>
</feature>
<feature type="binding site" evidence="1">
    <location>
        <position position="188"/>
    </location>
    <ligand>
        <name>S-adenosyl-L-methionine</name>
        <dbReference type="ChEBI" id="CHEBI:59789"/>
    </ligand>
</feature>
<feature type="binding site" evidence="1">
    <location>
        <position position="230"/>
    </location>
    <ligand>
        <name>S-adenosyl-L-methionine</name>
        <dbReference type="ChEBI" id="CHEBI:59789"/>
    </ligand>
</feature>
<sequence>MPWIQLKLNTTGANAEELSDALMEAGAVSITFQDTHDTPVFEPLPGETRLWGDTDVIGLFDAETDMKDVVAILEQHPLLGAGFAHKIEQLEDKDWEREWMDNFHPMRFGERLWICPSWRDIPDENAVNVMLDPGLAFGTGTHPTTSLCLQWLDGLDLNGKTVIDFGCGSGILAIAALKLGAAKAIGIDIDPQAIQASRDNAERNGVSDRLELYLPKDQPEAMKADVVVANILAGPLRELAPLISVLPVEGGLLGLSGILASQAESVCDAYAELFTLDPVVEKEEWCRITGRKK</sequence>
<dbReference type="EC" id="2.1.1.-" evidence="1"/>
<dbReference type="EMBL" id="AM933173">
    <property type="protein sequence ID" value="CAR39071.1"/>
    <property type="molecule type" value="Genomic_DNA"/>
</dbReference>
<dbReference type="RefSeq" id="WP_001145849.1">
    <property type="nucleotide sequence ID" value="NC_011274.1"/>
</dbReference>
<dbReference type="SMR" id="B5REY1"/>
<dbReference type="KEGG" id="seg:SG3274"/>
<dbReference type="HOGENOM" id="CLU_049382_4_1_6"/>
<dbReference type="Proteomes" id="UP000008321">
    <property type="component" value="Chromosome"/>
</dbReference>
<dbReference type="GO" id="GO:0005829">
    <property type="term" value="C:cytosol"/>
    <property type="evidence" value="ECO:0007669"/>
    <property type="project" value="TreeGrafter"/>
</dbReference>
<dbReference type="GO" id="GO:0016279">
    <property type="term" value="F:protein-lysine N-methyltransferase activity"/>
    <property type="evidence" value="ECO:0007669"/>
    <property type="project" value="TreeGrafter"/>
</dbReference>
<dbReference type="GO" id="GO:0032259">
    <property type="term" value="P:methylation"/>
    <property type="evidence" value="ECO:0007669"/>
    <property type="project" value="UniProtKB-KW"/>
</dbReference>
<dbReference type="CDD" id="cd02440">
    <property type="entry name" value="AdoMet_MTases"/>
    <property type="match status" value="1"/>
</dbReference>
<dbReference type="FunFam" id="3.40.50.150:FF:000021">
    <property type="entry name" value="Ribosomal protein L11 methyltransferase"/>
    <property type="match status" value="1"/>
</dbReference>
<dbReference type="Gene3D" id="3.40.50.150">
    <property type="entry name" value="Vaccinia Virus protein VP39"/>
    <property type="match status" value="1"/>
</dbReference>
<dbReference type="HAMAP" id="MF_00735">
    <property type="entry name" value="Methyltr_PrmA"/>
    <property type="match status" value="1"/>
</dbReference>
<dbReference type="InterPro" id="IPR050078">
    <property type="entry name" value="Ribosomal_L11_MeTrfase_PrmA"/>
</dbReference>
<dbReference type="InterPro" id="IPR004498">
    <property type="entry name" value="Ribosomal_PrmA_MeTrfase"/>
</dbReference>
<dbReference type="InterPro" id="IPR029063">
    <property type="entry name" value="SAM-dependent_MTases_sf"/>
</dbReference>
<dbReference type="NCBIfam" id="TIGR00406">
    <property type="entry name" value="prmA"/>
    <property type="match status" value="1"/>
</dbReference>
<dbReference type="PANTHER" id="PTHR43648">
    <property type="entry name" value="ELECTRON TRANSFER FLAVOPROTEIN BETA SUBUNIT LYSINE METHYLTRANSFERASE"/>
    <property type="match status" value="1"/>
</dbReference>
<dbReference type="PANTHER" id="PTHR43648:SF1">
    <property type="entry name" value="ELECTRON TRANSFER FLAVOPROTEIN BETA SUBUNIT LYSINE METHYLTRANSFERASE"/>
    <property type="match status" value="1"/>
</dbReference>
<dbReference type="Pfam" id="PF06325">
    <property type="entry name" value="PrmA"/>
    <property type="match status" value="1"/>
</dbReference>
<dbReference type="PIRSF" id="PIRSF000401">
    <property type="entry name" value="RPL11_MTase"/>
    <property type="match status" value="1"/>
</dbReference>
<dbReference type="SUPFAM" id="SSF53335">
    <property type="entry name" value="S-adenosyl-L-methionine-dependent methyltransferases"/>
    <property type="match status" value="1"/>
</dbReference>
<gene>
    <name evidence="1" type="primary">prmA</name>
    <name type="ordered locus">SG3274</name>
</gene>
<accession>B5REY1</accession>
<comment type="function">
    <text evidence="1">Methylates ribosomal protein L11.</text>
</comment>
<comment type="catalytic activity">
    <reaction evidence="1">
        <text>L-lysyl-[protein] + 3 S-adenosyl-L-methionine = N(6),N(6),N(6)-trimethyl-L-lysyl-[protein] + 3 S-adenosyl-L-homocysteine + 3 H(+)</text>
        <dbReference type="Rhea" id="RHEA:54192"/>
        <dbReference type="Rhea" id="RHEA-COMP:9752"/>
        <dbReference type="Rhea" id="RHEA-COMP:13826"/>
        <dbReference type="ChEBI" id="CHEBI:15378"/>
        <dbReference type="ChEBI" id="CHEBI:29969"/>
        <dbReference type="ChEBI" id="CHEBI:57856"/>
        <dbReference type="ChEBI" id="CHEBI:59789"/>
        <dbReference type="ChEBI" id="CHEBI:61961"/>
    </reaction>
</comment>
<comment type="subcellular location">
    <subcellularLocation>
        <location evidence="1">Cytoplasm</location>
    </subcellularLocation>
</comment>
<comment type="similarity">
    <text evidence="1">Belongs to the methyltransferase superfamily. PrmA family.</text>
</comment>
<reference key="1">
    <citation type="journal article" date="2008" name="Genome Res.">
        <title>Comparative genome analysis of Salmonella enteritidis PT4 and Salmonella gallinarum 287/91 provides insights into evolutionary and host adaptation pathways.</title>
        <authorList>
            <person name="Thomson N.R."/>
            <person name="Clayton D.J."/>
            <person name="Windhorst D."/>
            <person name="Vernikos G."/>
            <person name="Davidson S."/>
            <person name="Churcher C."/>
            <person name="Quail M.A."/>
            <person name="Stevens M."/>
            <person name="Jones M.A."/>
            <person name="Watson M."/>
            <person name="Barron A."/>
            <person name="Layton A."/>
            <person name="Pickard D."/>
            <person name="Kingsley R.A."/>
            <person name="Bignell A."/>
            <person name="Clark L."/>
            <person name="Harris B."/>
            <person name="Ormond D."/>
            <person name="Abdellah Z."/>
            <person name="Brooks K."/>
            <person name="Cherevach I."/>
            <person name="Chillingworth T."/>
            <person name="Woodward J."/>
            <person name="Norberczak H."/>
            <person name="Lord A."/>
            <person name="Arrowsmith C."/>
            <person name="Jagels K."/>
            <person name="Moule S."/>
            <person name="Mungall K."/>
            <person name="Saunders M."/>
            <person name="Whitehead S."/>
            <person name="Chabalgoity J.A."/>
            <person name="Maskell D."/>
            <person name="Humphreys T."/>
            <person name="Roberts M."/>
            <person name="Barrow P.A."/>
            <person name="Dougan G."/>
            <person name="Parkhill J."/>
        </authorList>
    </citation>
    <scope>NUCLEOTIDE SEQUENCE [LARGE SCALE GENOMIC DNA]</scope>
    <source>
        <strain>287/91 / NCTC 13346</strain>
    </source>
</reference>